<name>CML31_ARATH</name>
<proteinExistence type="evidence at transcript level"/>
<organism>
    <name type="scientific">Arabidopsis thaliana</name>
    <name type="common">Mouse-ear cress</name>
    <dbReference type="NCBI Taxonomy" id="3702"/>
    <lineage>
        <taxon>Eukaryota</taxon>
        <taxon>Viridiplantae</taxon>
        <taxon>Streptophyta</taxon>
        <taxon>Embryophyta</taxon>
        <taxon>Tracheophyta</taxon>
        <taxon>Spermatophyta</taxon>
        <taxon>Magnoliopsida</taxon>
        <taxon>eudicotyledons</taxon>
        <taxon>Gunneridae</taxon>
        <taxon>Pentapetalae</taxon>
        <taxon>rosids</taxon>
        <taxon>malvids</taxon>
        <taxon>Brassicales</taxon>
        <taxon>Brassicaceae</taxon>
        <taxon>Camelineae</taxon>
        <taxon>Arabidopsis</taxon>
    </lineage>
</organism>
<comment type="function">
    <text evidence="1">Potential calcium sensor.</text>
</comment>
<comment type="caution">
    <text evidence="3">Although assigned as a calmodulin family member by Ref.4, it only contains EF-hand domains.</text>
</comment>
<feature type="chain" id="PRO_0000342957" description="Probable calcium-binding protein CML31">
    <location>
        <begin position="1"/>
        <end position="144"/>
    </location>
</feature>
<feature type="domain" description="EF-hand 1" evidence="2">
    <location>
        <begin position="1"/>
        <end position="31"/>
    </location>
</feature>
<feature type="domain" description="EF-hand 2" evidence="2">
    <location>
        <begin position="32"/>
        <end position="67"/>
    </location>
</feature>
<feature type="domain" description="EF-hand 3" evidence="2">
    <location>
        <begin position="72"/>
        <end position="107"/>
    </location>
</feature>
<feature type="domain" description="EF-hand 4" evidence="2">
    <location>
        <begin position="108"/>
        <end position="143"/>
    </location>
</feature>
<feature type="binding site" evidence="2">
    <location>
        <position position="45"/>
    </location>
    <ligand>
        <name>Ca(2+)</name>
        <dbReference type="ChEBI" id="CHEBI:29108"/>
        <label>1</label>
    </ligand>
</feature>
<feature type="binding site" evidence="2">
    <location>
        <position position="47"/>
    </location>
    <ligand>
        <name>Ca(2+)</name>
        <dbReference type="ChEBI" id="CHEBI:29108"/>
        <label>1</label>
    </ligand>
</feature>
<feature type="binding site" evidence="2">
    <location>
        <position position="49"/>
    </location>
    <ligand>
        <name>Ca(2+)</name>
        <dbReference type="ChEBI" id="CHEBI:29108"/>
        <label>1</label>
    </ligand>
</feature>
<feature type="binding site" evidence="2">
    <location>
        <position position="51"/>
    </location>
    <ligand>
        <name>Ca(2+)</name>
        <dbReference type="ChEBI" id="CHEBI:29108"/>
        <label>1</label>
    </ligand>
</feature>
<feature type="binding site" evidence="2">
    <location>
        <position position="56"/>
    </location>
    <ligand>
        <name>Ca(2+)</name>
        <dbReference type="ChEBI" id="CHEBI:29108"/>
        <label>1</label>
    </ligand>
</feature>
<feature type="binding site" evidence="2">
    <location>
        <position position="85"/>
    </location>
    <ligand>
        <name>Ca(2+)</name>
        <dbReference type="ChEBI" id="CHEBI:29108"/>
        <label>2</label>
    </ligand>
</feature>
<feature type="binding site" evidence="2">
    <location>
        <position position="87"/>
    </location>
    <ligand>
        <name>Ca(2+)</name>
        <dbReference type="ChEBI" id="CHEBI:29108"/>
        <label>2</label>
    </ligand>
</feature>
<feature type="binding site" evidence="2">
    <location>
        <position position="89"/>
    </location>
    <ligand>
        <name>Ca(2+)</name>
        <dbReference type="ChEBI" id="CHEBI:29108"/>
        <label>2</label>
    </ligand>
</feature>
<feature type="binding site" evidence="2">
    <location>
        <position position="91"/>
    </location>
    <ligand>
        <name>Ca(2+)</name>
        <dbReference type="ChEBI" id="CHEBI:29108"/>
        <label>2</label>
    </ligand>
</feature>
<feature type="binding site" evidence="2">
    <location>
        <position position="96"/>
    </location>
    <ligand>
        <name>Ca(2+)</name>
        <dbReference type="ChEBI" id="CHEBI:29108"/>
        <label>2</label>
    </ligand>
</feature>
<feature type="binding site" evidence="2">
    <location>
        <position position="121"/>
    </location>
    <ligand>
        <name>Ca(2+)</name>
        <dbReference type="ChEBI" id="CHEBI:29108"/>
        <label>3</label>
    </ligand>
</feature>
<feature type="binding site" evidence="2">
    <location>
        <position position="123"/>
    </location>
    <ligand>
        <name>Ca(2+)</name>
        <dbReference type="ChEBI" id="CHEBI:29108"/>
        <label>3</label>
    </ligand>
</feature>
<feature type="binding site" evidence="2">
    <location>
        <position position="125"/>
    </location>
    <ligand>
        <name>Ca(2+)</name>
        <dbReference type="ChEBI" id="CHEBI:29108"/>
        <label>3</label>
    </ligand>
</feature>
<feature type="binding site" evidence="2">
    <location>
        <position position="132"/>
    </location>
    <ligand>
        <name>Ca(2+)</name>
        <dbReference type="ChEBI" id="CHEBI:29108"/>
        <label>3</label>
    </ligand>
</feature>
<dbReference type="EMBL" id="AC006921">
    <property type="protein sequence ID" value="AAD21447.2"/>
    <property type="molecule type" value="Genomic_DNA"/>
</dbReference>
<dbReference type="EMBL" id="AC007135">
    <property type="protein sequence ID" value="AAM15404.1"/>
    <property type="molecule type" value="Genomic_DNA"/>
</dbReference>
<dbReference type="EMBL" id="CP002685">
    <property type="protein sequence ID" value="AEC09213.1"/>
    <property type="molecule type" value="Genomic_DNA"/>
</dbReference>
<dbReference type="EMBL" id="DQ056568">
    <property type="protein sequence ID" value="AAY78718.1"/>
    <property type="molecule type" value="mRNA"/>
</dbReference>
<dbReference type="PIR" id="F84777">
    <property type="entry name" value="F84777"/>
</dbReference>
<dbReference type="RefSeq" id="NP_181160.1">
    <property type="nucleotide sequence ID" value="NM_129176.2"/>
</dbReference>
<dbReference type="SMR" id="Q9SJN6"/>
<dbReference type="FunCoup" id="Q9SJN6">
    <property type="interactions" value="219"/>
</dbReference>
<dbReference type="STRING" id="3702.Q9SJN6"/>
<dbReference type="PaxDb" id="3702-AT2G36180.1"/>
<dbReference type="ProteomicsDB" id="240901"/>
<dbReference type="EnsemblPlants" id="AT2G36180.1">
    <property type="protein sequence ID" value="AT2G36180.1"/>
    <property type="gene ID" value="AT2G36180"/>
</dbReference>
<dbReference type="GeneID" id="818190"/>
<dbReference type="Gramene" id="AT2G36180.1">
    <property type="protein sequence ID" value="AT2G36180.1"/>
    <property type="gene ID" value="AT2G36180"/>
</dbReference>
<dbReference type="KEGG" id="ath:AT2G36180"/>
<dbReference type="Araport" id="AT2G36180"/>
<dbReference type="TAIR" id="AT2G36180"/>
<dbReference type="eggNOG" id="KOG0027">
    <property type="taxonomic scope" value="Eukaryota"/>
</dbReference>
<dbReference type="HOGENOM" id="CLU_061288_20_7_1"/>
<dbReference type="InParanoid" id="Q9SJN6"/>
<dbReference type="OMA" id="EIDKMFI"/>
<dbReference type="PhylomeDB" id="Q9SJN6"/>
<dbReference type="PRO" id="PR:Q9SJN6"/>
<dbReference type="Proteomes" id="UP000006548">
    <property type="component" value="Chromosome 2"/>
</dbReference>
<dbReference type="ExpressionAtlas" id="Q9SJN6">
    <property type="expression patterns" value="baseline and differential"/>
</dbReference>
<dbReference type="GO" id="GO:0005509">
    <property type="term" value="F:calcium ion binding"/>
    <property type="evidence" value="ECO:0007669"/>
    <property type="project" value="InterPro"/>
</dbReference>
<dbReference type="CDD" id="cd00051">
    <property type="entry name" value="EFh"/>
    <property type="match status" value="1"/>
</dbReference>
<dbReference type="FunFam" id="1.10.238.10:FF:000353">
    <property type="entry name" value="Probable calcium-binding protein CML31"/>
    <property type="match status" value="1"/>
</dbReference>
<dbReference type="FunFam" id="1.10.238.10:FF:000505">
    <property type="entry name" value="Probable calcium-binding protein CML34"/>
    <property type="match status" value="1"/>
</dbReference>
<dbReference type="Gene3D" id="1.10.238.10">
    <property type="entry name" value="EF-hand"/>
    <property type="match status" value="2"/>
</dbReference>
<dbReference type="InterPro" id="IPR011992">
    <property type="entry name" value="EF-hand-dom_pair"/>
</dbReference>
<dbReference type="InterPro" id="IPR018247">
    <property type="entry name" value="EF_Hand_1_Ca_BS"/>
</dbReference>
<dbReference type="InterPro" id="IPR002048">
    <property type="entry name" value="EF_hand_dom"/>
</dbReference>
<dbReference type="InterPro" id="IPR039647">
    <property type="entry name" value="EF_hand_pair_protein_CML-like"/>
</dbReference>
<dbReference type="PANTHER" id="PTHR10891">
    <property type="entry name" value="EF-HAND CALCIUM-BINDING DOMAIN CONTAINING PROTEIN"/>
    <property type="match status" value="1"/>
</dbReference>
<dbReference type="Pfam" id="PF13202">
    <property type="entry name" value="EF-hand_5"/>
    <property type="match status" value="1"/>
</dbReference>
<dbReference type="Pfam" id="PF13499">
    <property type="entry name" value="EF-hand_7"/>
    <property type="match status" value="1"/>
</dbReference>
<dbReference type="Pfam" id="PF13833">
    <property type="entry name" value="EF-hand_8"/>
    <property type="match status" value="1"/>
</dbReference>
<dbReference type="SMART" id="SM00054">
    <property type="entry name" value="EFh"/>
    <property type="match status" value="4"/>
</dbReference>
<dbReference type="SUPFAM" id="SSF47473">
    <property type="entry name" value="EF-hand"/>
    <property type="match status" value="1"/>
</dbReference>
<dbReference type="PROSITE" id="PS00018">
    <property type="entry name" value="EF_HAND_1"/>
    <property type="match status" value="3"/>
</dbReference>
<dbReference type="PROSITE" id="PS50222">
    <property type="entry name" value="EF_HAND_2"/>
    <property type="match status" value="4"/>
</dbReference>
<reference key="1">
    <citation type="journal article" date="1999" name="Nature">
        <title>Sequence and analysis of chromosome 2 of the plant Arabidopsis thaliana.</title>
        <authorList>
            <person name="Lin X."/>
            <person name="Kaul S."/>
            <person name="Rounsley S.D."/>
            <person name="Shea T.P."/>
            <person name="Benito M.-I."/>
            <person name="Town C.D."/>
            <person name="Fujii C.Y."/>
            <person name="Mason T.M."/>
            <person name="Bowman C.L."/>
            <person name="Barnstead M.E."/>
            <person name="Feldblyum T.V."/>
            <person name="Buell C.R."/>
            <person name="Ketchum K.A."/>
            <person name="Lee J.J."/>
            <person name="Ronning C.M."/>
            <person name="Koo H.L."/>
            <person name="Moffat K.S."/>
            <person name="Cronin L.A."/>
            <person name="Shen M."/>
            <person name="Pai G."/>
            <person name="Van Aken S."/>
            <person name="Umayam L."/>
            <person name="Tallon L.J."/>
            <person name="Gill J.E."/>
            <person name="Adams M.D."/>
            <person name="Carrera A.J."/>
            <person name="Creasy T.H."/>
            <person name="Goodman H.M."/>
            <person name="Somerville C.R."/>
            <person name="Copenhaver G.P."/>
            <person name="Preuss D."/>
            <person name="Nierman W.C."/>
            <person name="White O."/>
            <person name="Eisen J.A."/>
            <person name="Salzberg S.L."/>
            <person name="Fraser C.M."/>
            <person name="Venter J.C."/>
        </authorList>
    </citation>
    <scope>NUCLEOTIDE SEQUENCE [LARGE SCALE GENOMIC DNA]</scope>
    <source>
        <strain>cv. Columbia</strain>
    </source>
</reference>
<reference key="2">
    <citation type="journal article" date="2017" name="Plant J.">
        <title>Araport11: a complete reannotation of the Arabidopsis thaliana reference genome.</title>
        <authorList>
            <person name="Cheng C.Y."/>
            <person name="Krishnakumar V."/>
            <person name="Chan A.P."/>
            <person name="Thibaud-Nissen F."/>
            <person name="Schobel S."/>
            <person name="Town C.D."/>
        </authorList>
    </citation>
    <scope>GENOME REANNOTATION</scope>
    <source>
        <strain>cv. Columbia</strain>
    </source>
</reference>
<reference key="3">
    <citation type="submission" date="2005-05" db="EMBL/GenBank/DDBJ databases">
        <authorList>
            <person name="Underwood B.A."/>
            <person name="Xiao Y.-L."/>
            <person name="Moskal W.A. Jr."/>
            <person name="Monaghan E.L."/>
            <person name="Wang W."/>
            <person name="Redman J.C."/>
            <person name="Wu H.C."/>
            <person name="Utterback T."/>
            <person name="Town C.D."/>
        </authorList>
    </citation>
    <scope>NUCLEOTIDE SEQUENCE [LARGE SCALE MRNA]</scope>
    <source>
        <strain>cv. Columbia</strain>
    </source>
</reference>
<reference key="4">
    <citation type="journal article" date="2003" name="New Phytol.">
        <title>Calmodulins and related potential calcium sensors of Arabidopsis.</title>
        <authorList>
            <person name="McCormack E."/>
            <person name="Braam J."/>
        </authorList>
    </citation>
    <scope>GENE FAMILY</scope>
    <scope>NOMENCLATURE</scope>
</reference>
<protein>
    <recommendedName>
        <fullName>Probable calcium-binding protein CML31</fullName>
    </recommendedName>
    <alternativeName>
        <fullName>Calmodulin-like protein 31</fullName>
    </alternativeName>
</protein>
<evidence type="ECO:0000250" key="1"/>
<evidence type="ECO:0000255" key="2">
    <source>
        <dbReference type="PROSITE-ProRule" id="PRU00448"/>
    </source>
</evidence>
<evidence type="ECO:0000305" key="3"/>
<accession>Q9SJN6</accession>
<gene>
    <name type="primary">CML31</name>
    <name type="ordered locus">At2g36180</name>
    <name type="ORF">F9C22.11</name>
</gene>
<keyword id="KW-0106">Calcium</keyword>
<keyword id="KW-0479">Metal-binding</keyword>
<keyword id="KW-1185">Reference proteome</keyword>
<keyword id="KW-0677">Repeat</keyword>
<sequence>MAEIFESVDKNKDGKILWDEFAEAIRVFSPQITSEEIDKMFIVLDVDGDGQIDDVEFASCLMVNGGGEKDTEEEVVMKEAFDLYDMDGDGKISASEIHVVLKRLGEKHTMEDCVVMVQTVDKDSDGFVNFEEFKIMMNSNKESH</sequence>